<name>MTN5_NOSS7</name>
<proteinExistence type="inferred from homology"/>
<evidence type="ECO:0000303" key="1">
    <source>
    </source>
</evidence>
<evidence type="ECO:0000303" key="2">
    <source>
    </source>
</evidence>
<evidence type="ECO:0000305" key="3"/>
<dbReference type="EC" id="2.1.1.-"/>
<dbReference type="EMBL" id="D14719">
    <property type="protein sequence ID" value="BAA03539.1"/>
    <property type="molecule type" value="Genomic_DNA"/>
</dbReference>
<dbReference type="EMBL" id="CP003552">
    <property type="protein sequence ID" value="AFY47111.1"/>
    <property type="molecule type" value="Genomic_DNA"/>
</dbReference>
<dbReference type="RefSeq" id="WP_015137567.1">
    <property type="nucleotide sequence ID" value="NC_019684.1"/>
</dbReference>
<dbReference type="SMR" id="P35678"/>
<dbReference type="STRING" id="28072.Nos7524_1224"/>
<dbReference type="REBASE" id="3475">
    <property type="entry name" value="M.NspV"/>
</dbReference>
<dbReference type="REBASE" id="57744">
    <property type="entry name" value="M.Nsp7524ORF1224P"/>
</dbReference>
<dbReference type="KEGG" id="nop:Nos7524_1224"/>
<dbReference type="PATRIC" id="fig|28072.8.peg.1339"/>
<dbReference type="eggNOG" id="COG0827">
    <property type="taxonomic scope" value="Bacteria"/>
</dbReference>
<dbReference type="HOGENOM" id="CLU_044835_0_0_3"/>
<dbReference type="OrthoDB" id="9784823at2"/>
<dbReference type="PRO" id="PR:P35678"/>
<dbReference type="Proteomes" id="UP000010378">
    <property type="component" value="Chromosome"/>
</dbReference>
<dbReference type="GO" id="GO:0003677">
    <property type="term" value="F:DNA binding"/>
    <property type="evidence" value="ECO:0007669"/>
    <property type="project" value="UniProtKB-KW"/>
</dbReference>
<dbReference type="GO" id="GO:0008168">
    <property type="term" value="F:methyltransferase activity"/>
    <property type="evidence" value="ECO:0007669"/>
    <property type="project" value="UniProtKB-KW"/>
</dbReference>
<dbReference type="GO" id="GO:0009307">
    <property type="term" value="P:DNA restriction-modification system"/>
    <property type="evidence" value="ECO:0007669"/>
    <property type="project" value="UniProtKB-KW"/>
</dbReference>
<dbReference type="GO" id="GO:0032259">
    <property type="term" value="P:methylation"/>
    <property type="evidence" value="ECO:0007669"/>
    <property type="project" value="UniProtKB-KW"/>
</dbReference>
<dbReference type="Gene3D" id="3.40.50.150">
    <property type="entry name" value="Vaccinia Virus protein VP39"/>
    <property type="match status" value="1"/>
</dbReference>
<dbReference type="InterPro" id="IPR050953">
    <property type="entry name" value="N4_N6_ade-DNA_methylase"/>
</dbReference>
<dbReference type="InterPro" id="IPR029063">
    <property type="entry name" value="SAM-dependent_MTases_sf"/>
</dbReference>
<dbReference type="PANTHER" id="PTHR33841:SF5">
    <property type="entry name" value="DNA METHYLASE (MODIFICATION METHYLASE) (METHYLTRANSFERASE)-RELATED"/>
    <property type="match status" value="1"/>
</dbReference>
<dbReference type="PANTHER" id="PTHR33841">
    <property type="entry name" value="DNA METHYLTRANSFERASE YEEA-RELATED"/>
    <property type="match status" value="1"/>
</dbReference>
<dbReference type="SUPFAM" id="SSF53335">
    <property type="entry name" value="S-adenosyl-L-methionine-dependent methyltransferases"/>
    <property type="match status" value="1"/>
</dbReference>
<accession>P35678</accession>
<accession>K9QPL7</accession>
<organism>
    <name type="scientific">Nostoc sp. (strain ATCC 29411 / PCC 7524)</name>
    <dbReference type="NCBI Taxonomy" id="28072"/>
    <lineage>
        <taxon>Bacteria</taxon>
        <taxon>Bacillati</taxon>
        <taxon>Cyanobacteriota</taxon>
        <taxon>Cyanophyceae</taxon>
        <taxon>Nostocales</taxon>
        <taxon>Nostocaceae</taxon>
        <taxon>Nostoc</taxon>
    </lineage>
</organism>
<protein>
    <recommendedName>
        <fullName evidence="1">Type II methyltransferase M.NspV</fullName>
        <shortName evidence="2">M.NspV</shortName>
        <ecNumber>2.1.1.-</ecNumber>
    </recommendedName>
    <alternativeName>
        <fullName>Methyltransferase NspV</fullName>
    </alternativeName>
    <alternativeName>
        <fullName>Modification methylase NspV</fullName>
    </alternativeName>
</protein>
<feature type="chain" id="PRO_0000087969" description="Type II methyltransferase M.NspV">
    <location>
        <begin position="1"/>
        <end position="480"/>
    </location>
</feature>
<feature type="sequence conflict" description="In Ref. 1; BAA03539." evidence="3" ref="1">
    <original>FP</original>
    <variation>LG</variation>
    <location>
        <begin position="314"/>
        <end position="315"/>
    </location>
</feature>
<feature type="sequence conflict" description="In Ref. 1; BAA03539." evidence="3" ref="1">
    <original>I</original>
    <variation>V</variation>
    <location>
        <position position="409"/>
    </location>
</feature>
<feature type="sequence conflict" description="In Ref. 1; BAA03539." evidence="3" ref="1">
    <original>VYFLSFEDEEIAFKTVALLNSSLARDFYSSLVFWDEKRPIKSSILNSLDLEVLAKVIL</original>
    <variation>FTFSVLRMKKSPLKPLRF</variation>
    <location>
        <begin position="423"/>
        <end position="480"/>
    </location>
</feature>
<gene>
    <name evidence="2" type="primary">nspVM</name>
    <name type="ordered locus">Nos7524_1224</name>
</gene>
<reference key="1">
    <citation type="journal article" date="1993" name="Nucleic Acids Res.">
        <title>Cloning and expression of the NspV restriction-modification genes of Nostoc sp. strain PCC7524.</title>
        <authorList>
            <person name="Ueno T."/>
            <person name="Ito H."/>
            <person name="Kotani H."/>
            <person name="Nakajima K."/>
        </authorList>
    </citation>
    <scope>NUCLEOTIDE SEQUENCE [GENOMIC DNA]</scope>
    <source>
        <strain>ATCC 29411 / PCC 7524</strain>
    </source>
</reference>
<reference key="2">
    <citation type="journal article" date="2013" name="Proc. Natl. Acad. Sci. U.S.A.">
        <title>Improving the coverage of the cyanobacterial phylum using diversity-driven genome sequencing.</title>
        <authorList>
            <person name="Shih P.M."/>
            <person name="Wu D."/>
            <person name="Latifi A."/>
            <person name="Axen S.D."/>
            <person name="Fewer D.P."/>
            <person name="Talla E."/>
            <person name="Calteau A."/>
            <person name="Cai F."/>
            <person name="Tandeau de Marsac N."/>
            <person name="Rippka R."/>
            <person name="Herdman M."/>
            <person name="Sivonen K."/>
            <person name="Coursin T."/>
            <person name="Laurent T."/>
            <person name="Goodwin L."/>
            <person name="Nolan M."/>
            <person name="Davenport K.W."/>
            <person name="Han C.S."/>
            <person name="Rubin E.M."/>
            <person name="Eisen J.A."/>
            <person name="Woyke T."/>
            <person name="Gugger M."/>
            <person name="Kerfeld C.A."/>
        </authorList>
    </citation>
    <scope>NUCLEOTIDE SEQUENCE [LARGE SCALE GENOMIC DNA]</scope>
    <source>
        <strain>ATCC 29411 / PCC 7524</strain>
    </source>
</reference>
<reference key="3">
    <citation type="journal article" date="2003" name="Nucleic Acids Res.">
        <title>A nomenclature for restriction enzymes, DNA methyltransferases, homing endonucleases and their genes.</title>
        <authorList>
            <person name="Roberts R.J."/>
            <person name="Belfort M."/>
            <person name="Bestor T."/>
            <person name="Bhagwat A.S."/>
            <person name="Bickle T.A."/>
            <person name="Bitinaite J."/>
            <person name="Blumenthal R.M."/>
            <person name="Degtyarev S.K."/>
            <person name="Dryden D.T."/>
            <person name="Dybvig K."/>
            <person name="Firman K."/>
            <person name="Gromova E.S."/>
            <person name="Gumport R.I."/>
            <person name="Halford S.E."/>
            <person name="Hattman S."/>
            <person name="Heitman J."/>
            <person name="Hornby D.P."/>
            <person name="Janulaitis A."/>
            <person name="Jeltsch A."/>
            <person name="Josephsen J."/>
            <person name="Kiss A."/>
            <person name="Klaenhammer T.R."/>
            <person name="Kobayashi I."/>
            <person name="Kong H."/>
            <person name="Krueger D.H."/>
            <person name="Lacks S."/>
            <person name="Marinus M.G."/>
            <person name="Miyahara M."/>
            <person name="Morgan R.D."/>
            <person name="Murray N.E."/>
            <person name="Nagaraja V."/>
            <person name="Piekarowicz A."/>
            <person name="Pingoud A."/>
            <person name="Raleigh E."/>
            <person name="Rao D.N."/>
            <person name="Reich N."/>
            <person name="Repin V.E."/>
            <person name="Selker E.U."/>
            <person name="Shaw P.C."/>
            <person name="Stein D.C."/>
            <person name="Stoddard B.L."/>
            <person name="Szybalski W."/>
            <person name="Trautner T.A."/>
            <person name="Van Etten J.L."/>
            <person name="Vitor J.M."/>
            <person name="Wilson G.G."/>
            <person name="Xu S.Y."/>
        </authorList>
    </citation>
    <scope>NOMENCLATURE</scope>
    <scope>SUBTYPE</scope>
</reference>
<comment type="function">
    <text evidence="1">A gamma subtype methylase that recognizes the double-stranded sequence 5'-TTCGAA-3', and methylates it on an unknown base to protect it against the NspV endonuclease.</text>
</comment>
<comment type="similarity">
    <text evidence="3">Belongs to the methyltransferase superfamily.</text>
</comment>
<keyword id="KW-0238">DNA-binding</keyword>
<keyword id="KW-0489">Methyltransferase</keyword>
<keyword id="KW-1185">Reference proteome</keyword>
<keyword id="KW-0680">Restriction system</keyword>
<keyword id="KW-0949">S-adenosyl-L-methionine</keyword>
<keyword id="KW-0808">Transferase</keyword>
<sequence>MIHNVEKTKLEYGDFQTPLELAEKVCEKLVQLGVNPDIIVEPTCGLGNFIEAASYSFTRAKKIFGIEINSNYLDKIKEKQIFLNDEKFDIRCGDFFQVDWSSIIGQLNKEILIIGNLPWVTNSQQGSIDGENLPIKNNFQNYHGLDAITGKSNFDISEWMLIRLVQCLQKHNGYLAMLCKTSVSRKILNYIHSQKLNLAYSATYKIDTRKYFRVNVDACLFLCKFDLISKNYFCDIFDNIETSKYYRIGYHNNVLIKDLVALKRLKNLYTNKSNIKWRSGIKHDCASVMELQKINDTFINGLGEIVDIEETYLFPLIKGSYVAQNKINATDRYILVTQKIIGEPTDNIRDLAPKTWQYLEKHEKLLDTRKSKIYQNKPRFSIFGVGSYSFSPWKIAICGLYKKLEFRLIGKISEKPTIFDDTVYFLSFEDEEIAFKTVALLNSSLARDFYSSLVFWDEKRPIKSSILNSLDLEVLAKVIL</sequence>